<proteinExistence type="inferred from homology"/>
<keyword id="KW-0963">Cytoplasm</keyword>
<keyword id="KW-0227">DNA damage</keyword>
<keyword id="KW-0233">DNA recombination</keyword>
<keyword id="KW-0234">DNA repair</keyword>
<keyword id="KW-0238">DNA-binding</keyword>
<keyword id="KW-0255">Endonuclease</keyword>
<keyword id="KW-0378">Hydrolase</keyword>
<keyword id="KW-0460">Magnesium</keyword>
<keyword id="KW-0479">Metal-binding</keyword>
<keyword id="KW-0540">Nuclease</keyword>
<organism>
    <name type="scientific">Trichodesmium erythraeum (strain IMS101)</name>
    <dbReference type="NCBI Taxonomy" id="203124"/>
    <lineage>
        <taxon>Bacteria</taxon>
        <taxon>Bacillati</taxon>
        <taxon>Cyanobacteriota</taxon>
        <taxon>Cyanophyceae</taxon>
        <taxon>Oscillatoriophycideae</taxon>
        <taxon>Oscillatoriales</taxon>
        <taxon>Microcoleaceae</taxon>
        <taxon>Trichodesmium</taxon>
    </lineage>
</organism>
<name>RUVC_TRIEI</name>
<protein>
    <recommendedName>
        <fullName evidence="1">Crossover junction endodeoxyribonuclease RuvC</fullName>
        <ecNumber evidence="1">3.1.21.10</ecNumber>
    </recommendedName>
    <alternativeName>
        <fullName evidence="1">Holliday junction nuclease RuvC</fullName>
    </alternativeName>
    <alternativeName>
        <fullName evidence="1">Holliday junction resolvase RuvC</fullName>
    </alternativeName>
</protein>
<sequence>MEKLILGLDPGLAVLGFGLIKCIYNSKTEKIDSTSLVDFGVIKTTKKQEMGQRLVTIYEDLHTILNNFKPDLAATEKLFFYRMGNTILVAQARGILILALAQNEIPLIEFTPAQIKQAVTGYGNADKYDVQQAVARELNLEEIPKPDDAADALAVALTASWLN</sequence>
<accession>Q10YI3</accession>
<reference key="1">
    <citation type="journal article" date="2015" name="Proc. Natl. Acad. Sci. U.S.A.">
        <title>Trichodesmium genome maintains abundant, widespread noncoding DNA in situ, despite oligotrophic lifestyle.</title>
        <authorList>
            <person name="Walworth N."/>
            <person name="Pfreundt U."/>
            <person name="Nelson W.C."/>
            <person name="Mincer T."/>
            <person name="Heidelberg J.F."/>
            <person name="Fu F."/>
            <person name="Waterbury J.B."/>
            <person name="Glavina del Rio T."/>
            <person name="Goodwin L."/>
            <person name="Kyrpides N.C."/>
            <person name="Land M.L."/>
            <person name="Woyke T."/>
            <person name="Hutchins D.A."/>
            <person name="Hess W.R."/>
            <person name="Webb E.A."/>
        </authorList>
    </citation>
    <scope>NUCLEOTIDE SEQUENCE [LARGE SCALE GENOMIC DNA]</scope>
    <source>
        <strain>IMS101</strain>
    </source>
</reference>
<feature type="chain" id="PRO_1000002851" description="Crossover junction endodeoxyribonuclease RuvC">
    <location>
        <begin position="1"/>
        <end position="163"/>
    </location>
</feature>
<feature type="active site" evidence="1">
    <location>
        <position position="9"/>
    </location>
</feature>
<feature type="active site" evidence="1">
    <location>
        <position position="76"/>
    </location>
</feature>
<feature type="active site" evidence="1">
    <location>
        <position position="148"/>
    </location>
</feature>
<feature type="binding site" evidence="1">
    <location>
        <position position="9"/>
    </location>
    <ligand>
        <name>Mg(2+)</name>
        <dbReference type="ChEBI" id="CHEBI:18420"/>
        <label>1</label>
    </ligand>
</feature>
<feature type="binding site" evidence="1">
    <location>
        <position position="76"/>
    </location>
    <ligand>
        <name>Mg(2+)</name>
        <dbReference type="ChEBI" id="CHEBI:18420"/>
        <label>2</label>
    </ligand>
</feature>
<feature type="binding site" evidence="1">
    <location>
        <position position="148"/>
    </location>
    <ligand>
        <name>Mg(2+)</name>
        <dbReference type="ChEBI" id="CHEBI:18420"/>
        <label>1</label>
    </ligand>
</feature>
<evidence type="ECO:0000255" key="1">
    <source>
        <dbReference type="HAMAP-Rule" id="MF_00034"/>
    </source>
</evidence>
<gene>
    <name evidence="1" type="primary">ruvC</name>
    <name type="ordered locus">Tery_3620</name>
</gene>
<dbReference type="EC" id="3.1.21.10" evidence="1"/>
<dbReference type="EMBL" id="CP000393">
    <property type="protein sequence ID" value="ABG52691.1"/>
    <property type="molecule type" value="Genomic_DNA"/>
</dbReference>
<dbReference type="RefSeq" id="WP_011613023.1">
    <property type="nucleotide sequence ID" value="NC_008312.1"/>
</dbReference>
<dbReference type="SMR" id="Q10YI3"/>
<dbReference type="STRING" id="203124.Tery_3620"/>
<dbReference type="KEGG" id="ter:Tery_3620"/>
<dbReference type="eggNOG" id="COG0817">
    <property type="taxonomic scope" value="Bacteria"/>
</dbReference>
<dbReference type="HOGENOM" id="CLU_091257_3_1_3"/>
<dbReference type="OrthoDB" id="9805499at2"/>
<dbReference type="GO" id="GO:0005737">
    <property type="term" value="C:cytoplasm"/>
    <property type="evidence" value="ECO:0007669"/>
    <property type="project" value="UniProtKB-SubCell"/>
</dbReference>
<dbReference type="GO" id="GO:0048476">
    <property type="term" value="C:Holliday junction resolvase complex"/>
    <property type="evidence" value="ECO:0007669"/>
    <property type="project" value="UniProtKB-UniRule"/>
</dbReference>
<dbReference type="GO" id="GO:0008821">
    <property type="term" value="F:crossover junction DNA endonuclease activity"/>
    <property type="evidence" value="ECO:0007669"/>
    <property type="project" value="UniProtKB-UniRule"/>
</dbReference>
<dbReference type="GO" id="GO:0003677">
    <property type="term" value="F:DNA binding"/>
    <property type="evidence" value="ECO:0007669"/>
    <property type="project" value="UniProtKB-KW"/>
</dbReference>
<dbReference type="GO" id="GO:0000287">
    <property type="term" value="F:magnesium ion binding"/>
    <property type="evidence" value="ECO:0007669"/>
    <property type="project" value="UniProtKB-UniRule"/>
</dbReference>
<dbReference type="GO" id="GO:0006310">
    <property type="term" value="P:DNA recombination"/>
    <property type="evidence" value="ECO:0007669"/>
    <property type="project" value="UniProtKB-UniRule"/>
</dbReference>
<dbReference type="GO" id="GO:0006281">
    <property type="term" value="P:DNA repair"/>
    <property type="evidence" value="ECO:0007669"/>
    <property type="project" value="UniProtKB-UniRule"/>
</dbReference>
<dbReference type="CDD" id="cd16962">
    <property type="entry name" value="RuvC"/>
    <property type="match status" value="1"/>
</dbReference>
<dbReference type="FunFam" id="3.30.420.10:FF:000002">
    <property type="entry name" value="Crossover junction endodeoxyribonuclease RuvC"/>
    <property type="match status" value="1"/>
</dbReference>
<dbReference type="Gene3D" id="3.30.420.10">
    <property type="entry name" value="Ribonuclease H-like superfamily/Ribonuclease H"/>
    <property type="match status" value="1"/>
</dbReference>
<dbReference type="HAMAP" id="MF_00034">
    <property type="entry name" value="RuvC"/>
    <property type="match status" value="1"/>
</dbReference>
<dbReference type="InterPro" id="IPR012337">
    <property type="entry name" value="RNaseH-like_sf"/>
</dbReference>
<dbReference type="InterPro" id="IPR036397">
    <property type="entry name" value="RNaseH_sf"/>
</dbReference>
<dbReference type="InterPro" id="IPR002176">
    <property type="entry name" value="X-over_junc_endoDNase_RuvC"/>
</dbReference>
<dbReference type="NCBIfam" id="NF000711">
    <property type="entry name" value="PRK00039.2-1"/>
    <property type="match status" value="1"/>
</dbReference>
<dbReference type="NCBIfam" id="TIGR00228">
    <property type="entry name" value="ruvC"/>
    <property type="match status" value="1"/>
</dbReference>
<dbReference type="PANTHER" id="PTHR30194">
    <property type="entry name" value="CROSSOVER JUNCTION ENDODEOXYRIBONUCLEASE RUVC"/>
    <property type="match status" value="1"/>
</dbReference>
<dbReference type="PANTHER" id="PTHR30194:SF3">
    <property type="entry name" value="CROSSOVER JUNCTION ENDODEOXYRIBONUCLEASE RUVC"/>
    <property type="match status" value="1"/>
</dbReference>
<dbReference type="Pfam" id="PF02075">
    <property type="entry name" value="RuvC"/>
    <property type="match status" value="1"/>
</dbReference>
<dbReference type="PRINTS" id="PR00696">
    <property type="entry name" value="RSOLVASERUVC"/>
</dbReference>
<dbReference type="SUPFAM" id="SSF53098">
    <property type="entry name" value="Ribonuclease H-like"/>
    <property type="match status" value="1"/>
</dbReference>
<comment type="function">
    <text evidence="1">The RuvA-RuvB-RuvC complex processes Holliday junction (HJ) DNA during genetic recombination and DNA repair. Endonuclease that resolves HJ intermediates. Cleaves cruciform DNA by making single-stranded nicks across the HJ at symmetrical positions within the homologous arms, yielding a 5'-phosphate and a 3'-hydroxyl group; requires a central core of homology in the junction. The consensus cleavage sequence is 5'-(A/T)TT(C/G)-3'. Cleavage occurs on the 3'-side of the TT dinucleotide at the point of strand exchange. HJ branch migration catalyzed by RuvA-RuvB allows RuvC to scan DNA until it finds its consensus sequence, where it cleaves and resolves the cruciform DNA.</text>
</comment>
<comment type="catalytic activity">
    <reaction evidence="1">
        <text>Endonucleolytic cleavage at a junction such as a reciprocal single-stranded crossover between two homologous DNA duplexes (Holliday junction).</text>
        <dbReference type="EC" id="3.1.21.10"/>
    </reaction>
</comment>
<comment type="cofactor">
    <cofactor evidence="1">
        <name>Mg(2+)</name>
        <dbReference type="ChEBI" id="CHEBI:18420"/>
    </cofactor>
    <text evidence="1">Binds 2 Mg(2+) ion per subunit.</text>
</comment>
<comment type="subunit">
    <text evidence="1">Homodimer which binds Holliday junction (HJ) DNA. The HJ becomes 2-fold symmetrical on binding to RuvC with unstacked arms; it has a different conformation from HJ DNA in complex with RuvA. In the full resolvosome a probable DNA-RuvA(4)-RuvB(12)-RuvC(2) complex forms which resolves the HJ.</text>
</comment>
<comment type="subcellular location">
    <subcellularLocation>
        <location evidence="1">Cytoplasm</location>
    </subcellularLocation>
</comment>
<comment type="similarity">
    <text evidence="1">Belongs to the RuvC family.</text>
</comment>